<feature type="initiator methionine" description="Removed" evidence="1">
    <location>
        <position position="1"/>
    </location>
</feature>
<feature type="chain" id="PRO_0000135337" description="Glutamine--fructose-6-phosphate aminotransferase [isomerizing]">
    <location>
        <begin position="2"/>
        <end position="608"/>
    </location>
</feature>
<feature type="domain" description="Glutamine amidotransferase type-2" evidence="1">
    <location>
        <begin position="2"/>
        <end position="218"/>
    </location>
</feature>
<feature type="domain" description="SIS 1" evidence="1">
    <location>
        <begin position="284"/>
        <end position="423"/>
    </location>
</feature>
<feature type="domain" description="SIS 2" evidence="1">
    <location>
        <begin position="456"/>
        <end position="598"/>
    </location>
</feature>
<feature type="active site" description="Nucleophile; for GATase activity" evidence="1">
    <location>
        <position position="2"/>
    </location>
</feature>
<feature type="active site" description="For Fru-6P isomerization activity" evidence="1">
    <location>
        <position position="603"/>
    </location>
</feature>
<gene>
    <name evidence="1" type="primary">glmS</name>
    <name type="ordered locus">GOX0007</name>
</gene>
<organism>
    <name type="scientific">Gluconobacter oxydans (strain 621H)</name>
    <name type="common">Gluconobacter suboxydans</name>
    <dbReference type="NCBI Taxonomy" id="290633"/>
    <lineage>
        <taxon>Bacteria</taxon>
        <taxon>Pseudomonadati</taxon>
        <taxon>Pseudomonadota</taxon>
        <taxon>Alphaproteobacteria</taxon>
        <taxon>Acetobacterales</taxon>
        <taxon>Acetobacteraceae</taxon>
        <taxon>Gluconobacter</taxon>
    </lineage>
</organism>
<keyword id="KW-0032">Aminotransferase</keyword>
<keyword id="KW-0963">Cytoplasm</keyword>
<keyword id="KW-0315">Glutamine amidotransferase</keyword>
<keyword id="KW-1185">Reference proteome</keyword>
<keyword id="KW-0677">Repeat</keyword>
<keyword id="KW-0808">Transferase</keyword>
<dbReference type="EC" id="2.6.1.16" evidence="1"/>
<dbReference type="EMBL" id="CP000009">
    <property type="protein sequence ID" value="AAW59806.1"/>
    <property type="molecule type" value="Genomic_DNA"/>
</dbReference>
<dbReference type="RefSeq" id="WP_011251610.1">
    <property type="nucleotide sequence ID" value="NC_006677.1"/>
</dbReference>
<dbReference type="SMR" id="Q5FUY5"/>
<dbReference type="STRING" id="290633.GOX0007"/>
<dbReference type="KEGG" id="gox:GOX0007"/>
<dbReference type="eggNOG" id="COG0449">
    <property type="taxonomic scope" value="Bacteria"/>
</dbReference>
<dbReference type="HOGENOM" id="CLU_012520_5_2_5"/>
<dbReference type="Proteomes" id="UP000006375">
    <property type="component" value="Chromosome"/>
</dbReference>
<dbReference type="GO" id="GO:0005829">
    <property type="term" value="C:cytosol"/>
    <property type="evidence" value="ECO:0007669"/>
    <property type="project" value="TreeGrafter"/>
</dbReference>
<dbReference type="GO" id="GO:0097367">
    <property type="term" value="F:carbohydrate derivative binding"/>
    <property type="evidence" value="ECO:0007669"/>
    <property type="project" value="InterPro"/>
</dbReference>
<dbReference type="GO" id="GO:0004360">
    <property type="term" value="F:glutamine-fructose-6-phosphate transaminase (isomerizing) activity"/>
    <property type="evidence" value="ECO:0007669"/>
    <property type="project" value="UniProtKB-UniRule"/>
</dbReference>
<dbReference type="GO" id="GO:0005975">
    <property type="term" value="P:carbohydrate metabolic process"/>
    <property type="evidence" value="ECO:0007669"/>
    <property type="project" value="UniProtKB-UniRule"/>
</dbReference>
<dbReference type="GO" id="GO:0006002">
    <property type="term" value="P:fructose 6-phosphate metabolic process"/>
    <property type="evidence" value="ECO:0007669"/>
    <property type="project" value="TreeGrafter"/>
</dbReference>
<dbReference type="GO" id="GO:0006487">
    <property type="term" value="P:protein N-linked glycosylation"/>
    <property type="evidence" value="ECO:0007669"/>
    <property type="project" value="TreeGrafter"/>
</dbReference>
<dbReference type="GO" id="GO:0006047">
    <property type="term" value="P:UDP-N-acetylglucosamine metabolic process"/>
    <property type="evidence" value="ECO:0007669"/>
    <property type="project" value="TreeGrafter"/>
</dbReference>
<dbReference type="CDD" id="cd00714">
    <property type="entry name" value="GFAT"/>
    <property type="match status" value="1"/>
</dbReference>
<dbReference type="CDD" id="cd05008">
    <property type="entry name" value="SIS_GlmS_GlmD_1"/>
    <property type="match status" value="1"/>
</dbReference>
<dbReference type="CDD" id="cd05009">
    <property type="entry name" value="SIS_GlmS_GlmD_2"/>
    <property type="match status" value="1"/>
</dbReference>
<dbReference type="FunFam" id="3.40.50.10490:FF:000001">
    <property type="entry name" value="Glutamine--fructose-6-phosphate aminotransferase [isomerizing]"/>
    <property type="match status" value="1"/>
</dbReference>
<dbReference type="FunFam" id="3.40.50.10490:FF:000002">
    <property type="entry name" value="Glutamine--fructose-6-phosphate aminotransferase [isomerizing]"/>
    <property type="match status" value="1"/>
</dbReference>
<dbReference type="FunFam" id="3.60.20.10:FF:000006">
    <property type="entry name" value="Glutamine--fructose-6-phosphate aminotransferase [isomerizing]"/>
    <property type="match status" value="1"/>
</dbReference>
<dbReference type="Gene3D" id="3.40.50.10490">
    <property type="entry name" value="Glucose-6-phosphate isomerase like protein, domain 1"/>
    <property type="match status" value="2"/>
</dbReference>
<dbReference type="Gene3D" id="3.60.20.10">
    <property type="entry name" value="Glutamine Phosphoribosylpyrophosphate, subunit 1, domain 1"/>
    <property type="match status" value="1"/>
</dbReference>
<dbReference type="HAMAP" id="MF_00164">
    <property type="entry name" value="GlmS"/>
    <property type="match status" value="1"/>
</dbReference>
<dbReference type="InterPro" id="IPR017932">
    <property type="entry name" value="GATase_2_dom"/>
</dbReference>
<dbReference type="InterPro" id="IPR005855">
    <property type="entry name" value="GFAT"/>
</dbReference>
<dbReference type="InterPro" id="IPR047084">
    <property type="entry name" value="GFAT_N"/>
</dbReference>
<dbReference type="InterPro" id="IPR035466">
    <property type="entry name" value="GlmS/AgaS_SIS"/>
</dbReference>
<dbReference type="InterPro" id="IPR035490">
    <property type="entry name" value="GlmS/FrlB_SIS"/>
</dbReference>
<dbReference type="InterPro" id="IPR029055">
    <property type="entry name" value="Ntn_hydrolases_N"/>
</dbReference>
<dbReference type="InterPro" id="IPR001347">
    <property type="entry name" value="SIS_dom"/>
</dbReference>
<dbReference type="InterPro" id="IPR046348">
    <property type="entry name" value="SIS_dom_sf"/>
</dbReference>
<dbReference type="NCBIfam" id="TIGR01135">
    <property type="entry name" value="glmS"/>
    <property type="match status" value="1"/>
</dbReference>
<dbReference type="NCBIfam" id="NF001484">
    <property type="entry name" value="PRK00331.1"/>
    <property type="match status" value="1"/>
</dbReference>
<dbReference type="PANTHER" id="PTHR10937">
    <property type="entry name" value="GLUCOSAMINE--FRUCTOSE-6-PHOSPHATE AMINOTRANSFERASE, ISOMERIZING"/>
    <property type="match status" value="1"/>
</dbReference>
<dbReference type="PANTHER" id="PTHR10937:SF0">
    <property type="entry name" value="GLUTAMINE--FRUCTOSE-6-PHOSPHATE TRANSAMINASE (ISOMERIZING)"/>
    <property type="match status" value="1"/>
</dbReference>
<dbReference type="Pfam" id="PF13522">
    <property type="entry name" value="GATase_6"/>
    <property type="match status" value="1"/>
</dbReference>
<dbReference type="Pfam" id="PF01380">
    <property type="entry name" value="SIS"/>
    <property type="match status" value="2"/>
</dbReference>
<dbReference type="SUPFAM" id="SSF56235">
    <property type="entry name" value="N-terminal nucleophile aminohydrolases (Ntn hydrolases)"/>
    <property type="match status" value="1"/>
</dbReference>
<dbReference type="SUPFAM" id="SSF53697">
    <property type="entry name" value="SIS domain"/>
    <property type="match status" value="1"/>
</dbReference>
<dbReference type="PROSITE" id="PS51278">
    <property type="entry name" value="GATASE_TYPE_2"/>
    <property type="match status" value="1"/>
</dbReference>
<dbReference type="PROSITE" id="PS51464">
    <property type="entry name" value="SIS"/>
    <property type="match status" value="2"/>
</dbReference>
<protein>
    <recommendedName>
        <fullName evidence="1">Glutamine--fructose-6-phosphate aminotransferase [isomerizing]</fullName>
        <ecNumber evidence="1">2.6.1.16</ecNumber>
    </recommendedName>
    <alternativeName>
        <fullName evidence="1">D-fructose-6-phosphate amidotransferase</fullName>
    </alternativeName>
    <alternativeName>
        <fullName evidence="1">GFAT</fullName>
    </alternativeName>
    <alternativeName>
        <fullName evidence="1">Glucosamine-6-phosphate synthase</fullName>
    </alternativeName>
    <alternativeName>
        <fullName evidence="1">Hexosephosphate aminotransferase</fullName>
    </alternativeName>
    <alternativeName>
        <fullName evidence="1">L-glutamine--D-fructose-6-phosphate amidotransferase</fullName>
    </alternativeName>
</protein>
<sequence length="608" mass="65655">MCGICGIVGHQPASPIAFEALRRLEYRGYDSAGIATLTASGDIERRRAAGKLDNLEHVLKEHPLPGTTGIGHTRWATHGAPTENNAHPHEAGRVAIVHNGIIENFAELKKELEAKGRVFRTETDSETVAHLVDDYLGQGLEPREAAFAAIKRLEGAYAIAMIFKDHEGLLIGARHGAPLAVGYGNGEMFLGSDSIALAPMARKMTYLEDGDWCELTPDHVTIFDMTGAEVSRPVQDLTFMAGQVGKDGYRHYMEKELHEHPVAIGQTLKRITDPASKRIALPEMPFDPAQVPRITITACGSAYYAGMVGRYWLESLARIPVEIDVASEMRYREPPQPDKGVALLISQSGETADTLGVLRSLKKAGQSIVSVLNVEHSTMGRESDLVLGMDAGPEISVASTKAFTAQLSVLAALAIDFARARGTMDQAREERLTASLLDLPSRAAEVFTRTKDIQAMAAVVAQARDVLYLGRGICTPIAFEGALKLKEISYIHAEAYAAGELKHGPISLIDQTVPVVAIAPSTILFDKTLSNLQEAKARGGRILAFTDAEGAKRLEGVAEQVVIMPDVDAFVAPILYAIPVQMLAYEVALLKGTDVDQPRNLAKSVTVE</sequence>
<evidence type="ECO:0000255" key="1">
    <source>
        <dbReference type="HAMAP-Rule" id="MF_00164"/>
    </source>
</evidence>
<proteinExistence type="inferred from homology"/>
<comment type="function">
    <text evidence="1">Catalyzes the first step in hexosamine metabolism, converting fructose-6P into glucosamine-6P using glutamine as a nitrogen source.</text>
</comment>
<comment type="catalytic activity">
    <reaction evidence="1">
        <text>D-fructose 6-phosphate + L-glutamine = D-glucosamine 6-phosphate + L-glutamate</text>
        <dbReference type="Rhea" id="RHEA:13237"/>
        <dbReference type="ChEBI" id="CHEBI:29985"/>
        <dbReference type="ChEBI" id="CHEBI:58359"/>
        <dbReference type="ChEBI" id="CHEBI:58725"/>
        <dbReference type="ChEBI" id="CHEBI:61527"/>
        <dbReference type="EC" id="2.6.1.16"/>
    </reaction>
</comment>
<comment type="subunit">
    <text evidence="1">Homodimer.</text>
</comment>
<comment type="subcellular location">
    <subcellularLocation>
        <location evidence="1">Cytoplasm</location>
    </subcellularLocation>
</comment>
<reference key="1">
    <citation type="journal article" date="2005" name="Nat. Biotechnol.">
        <title>Complete genome sequence of the acetic acid bacterium Gluconobacter oxydans.</title>
        <authorList>
            <person name="Prust C."/>
            <person name="Hoffmeister M."/>
            <person name="Liesegang H."/>
            <person name="Wiezer A."/>
            <person name="Fricke W.F."/>
            <person name="Ehrenreich A."/>
            <person name="Gottschalk G."/>
            <person name="Deppenmeier U."/>
        </authorList>
    </citation>
    <scope>NUCLEOTIDE SEQUENCE [LARGE SCALE GENOMIC DNA]</scope>
    <source>
        <strain>621H</strain>
    </source>
</reference>
<accession>Q5FUY5</accession>
<name>GLMS_GLUOX</name>